<keyword id="KW-0007">Acetylation</keyword>
<keyword id="KW-0240">DNA-directed RNA polymerase</keyword>
<keyword id="KW-0460">Magnesium</keyword>
<keyword id="KW-0479">Metal-binding</keyword>
<keyword id="KW-0548">Nucleotidyltransferase</keyword>
<keyword id="KW-1185">Reference proteome</keyword>
<keyword id="KW-0804">Transcription</keyword>
<keyword id="KW-0808">Transferase</keyword>
<keyword id="KW-0862">Zinc</keyword>
<accession>A1AIG0</accession>
<comment type="function">
    <text evidence="1">DNA-dependent RNA polymerase catalyzes the transcription of DNA into RNA using the four ribonucleoside triphosphates as substrates.</text>
</comment>
<comment type="catalytic activity">
    <reaction evidence="1">
        <text>RNA(n) + a ribonucleoside 5'-triphosphate = RNA(n+1) + diphosphate</text>
        <dbReference type="Rhea" id="RHEA:21248"/>
        <dbReference type="Rhea" id="RHEA-COMP:14527"/>
        <dbReference type="Rhea" id="RHEA-COMP:17342"/>
        <dbReference type="ChEBI" id="CHEBI:33019"/>
        <dbReference type="ChEBI" id="CHEBI:61557"/>
        <dbReference type="ChEBI" id="CHEBI:140395"/>
        <dbReference type="EC" id="2.7.7.6"/>
    </reaction>
</comment>
<comment type="cofactor">
    <cofactor evidence="1">
        <name>Mg(2+)</name>
        <dbReference type="ChEBI" id="CHEBI:18420"/>
    </cofactor>
    <text evidence="1">Binds 1 Mg(2+) ion per subunit.</text>
</comment>
<comment type="cofactor">
    <cofactor evidence="1">
        <name>Zn(2+)</name>
        <dbReference type="ChEBI" id="CHEBI:29105"/>
    </cofactor>
    <text evidence="1">Binds 2 Zn(2+) ions per subunit.</text>
</comment>
<comment type="subunit">
    <text evidence="1">The RNAP catalytic core consists of 2 alpha, 1 beta, 1 beta' and 1 omega subunit. When a sigma factor is associated with the core the holoenzyme is formed, which can initiate transcription.</text>
</comment>
<comment type="similarity">
    <text evidence="1">Belongs to the RNA polymerase beta' chain family.</text>
</comment>
<reference key="1">
    <citation type="journal article" date="2007" name="J. Bacteriol.">
        <title>The genome sequence of avian pathogenic Escherichia coli strain O1:K1:H7 shares strong similarities with human extraintestinal pathogenic E. coli genomes.</title>
        <authorList>
            <person name="Johnson T.J."/>
            <person name="Kariyawasam S."/>
            <person name="Wannemuehler Y."/>
            <person name="Mangiamele P."/>
            <person name="Johnson S.J."/>
            <person name="Doetkott C."/>
            <person name="Skyberg J.A."/>
            <person name="Lynne A.M."/>
            <person name="Johnson J.R."/>
            <person name="Nolan L.K."/>
        </authorList>
    </citation>
    <scope>NUCLEOTIDE SEQUENCE [LARGE SCALE GENOMIC DNA]</scope>
</reference>
<proteinExistence type="inferred from homology"/>
<evidence type="ECO:0000255" key="1">
    <source>
        <dbReference type="HAMAP-Rule" id="MF_01322"/>
    </source>
</evidence>
<gene>
    <name evidence="1" type="primary">rpoC</name>
    <name type="ordered locus">Ecok1_39560</name>
    <name type="ORF">APECO1_2485</name>
</gene>
<dbReference type="EC" id="2.7.7.6" evidence="1"/>
<dbReference type="EMBL" id="CP000468">
    <property type="protein sequence ID" value="ABJ03450.1"/>
    <property type="molecule type" value="Genomic_DNA"/>
</dbReference>
<dbReference type="RefSeq" id="WP_000653952.1">
    <property type="nucleotide sequence ID" value="NZ_CADILS010000053.1"/>
</dbReference>
<dbReference type="SMR" id="A1AIG0"/>
<dbReference type="KEGG" id="ecv:APECO1_2485"/>
<dbReference type="HOGENOM" id="CLU_000524_3_1_6"/>
<dbReference type="Proteomes" id="UP000008216">
    <property type="component" value="Chromosome"/>
</dbReference>
<dbReference type="GO" id="GO:0000428">
    <property type="term" value="C:DNA-directed RNA polymerase complex"/>
    <property type="evidence" value="ECO:0007669"/>
    <property type="project" value="UniProtKB-KW"/>
</dbReference>
<dbReference type="GO" id="GO:0003677">
    <property type="term" value="F:DNA binding"/>
    <property type="evidence" value="ECO:0007669"/>
    <property type="project" value="UniProtKB-UniRule"/>
</dbReference>
<dbReference type="GO" id="GO:0003899">
    <property type="term" value="F:DNA-directed RNA polymerase activity"/>
    <property type="evidence" value="ECO:0007669"/>
    <property type="project" value="UniProtKB-UniRule"/>
</dbReference>
<dbReference type="GO" id="GO:0000287">
    <property type="term" value="F:magnesium ion binding"/>
    <property type="evidence" value="ECO:0007669"/>
    <property type="project" value="UniProtKB-UniRule"/>
</dbReference>
<dbReference type="GO" id="GO:0008270">
    <property type="term" value="F:zinc ion binding"/>
    <property type="evidence" value="ECO:0007669"/>
    <property type="project" value="UniProtKB-UniRule"/>
</dbReference>
<dbReference type="GO" id="GO:0006351">
    <property type="term" value="P:DNA-templated transcription"/>
    <property type="evidence" value="ECO:0007669"/>
    <property type="project" value="UniProtKB-UniRule"/>
</dbReference>
<dbReference type="CDD" id="cd02655">
    <property type="entry name" value="RNAP_beta'_C"/>
    <property type="match status" value="1"/>
</dbReference>
<dbReference type="CDD" id="cd01609">
    <property type="entry name" value="RNAP_beta'_N"/>
    <property type="match status" value="1"/>
</dbReference>
<dbReference type="FunFam" id="1.10.132.30:FF:000003">
    <property type="entry name" value="DNA-directed RNA polymerase subunit beta"/>
    <property type="match status" value="1"/>
</dbReference>
<dbReference type="FunFam" id="1.10.150.390:FF:000002">
    <property type="entry name" value="DNA-directed RNA polymerase subunit beta"/>
    <property type="match status" value="1"/>
</dbReference>
<dbReference type="FunFam" id="1.10.274.100:FF:000002">
    <property type="entry name" value="DNA-directed RNA polymerase subunit beta"/>
    <property type="match status" value="1"/>
</dbReference>
<dbReference type="FunFam" id="1.10.40.90:FF:000001">
    <property type="entry name" value="DNA-directed RNA polymerase subunit beta"/>
    <property type="match status" value="1"/>
</dbReference>
<dbReference type="FunFam" id="2.40.50.100:FF:000012">
    <property type="entry name" value="DNA-directed RNA polymerase subunit beta"/>
    <property type="match status" value="1"/>
</dbReference>
<dbReference type="FunFam" id="2.40.50.100:FF:000016">
    <property type="entry name" value="DNA-directed RNA polymerase subunit beta"/>
    <property type="match status" value="1"/>
</dbReference>
<dbReference type="FunFam" id="2.40.50.100:FF:000019">
    <property type="entry name" value="DNA-directed RNA polymerase subunit beta"/>
    <property type="match status" value="1"/>
</dbReference>
<dbReference type="FunFam" id="4.10.860.120:FF:000001">
    <property type="entry name" value="DNA-directed RNA polymerase subunit beta"/>
    <property type="match status" value="1"/>
</dbReference>
<dbReference type="Gene3D" id="1.10.132.30">
    <property type="match status" value="1"/>
</dbReference>
<dbReference type="Gene3D" id="1.10.150.390">
    <property type="match status" value="1"/>
</dbReference>
<dbReference type="Gene3D" id="1.10.1790.20">
    <property type="match status" value="1"/>
</dbReference>
<dbReference type="Gene3D" id="1.10.40.90">
    <property type="match status" value="1"/>
</dbReference>
<dbReference type="Gene3D" id="2.40.40.20">
    <property type="match status" value="1"/>
</dbReference>
<dbReference type="Gene3D" id="2.40.50.100">
    <property type="match status" value="3"/>
</dbReference>
<dbReference type="Gene3D" id="4.10.860.120">
    <property type="entry name" value="RNA polymerase II, clamp domain"/>
    <property type="match status" value="1"/>
</dbReference>
<dbReference type="Gene3D" id="1.10.274.100">
    <property type="entry name" value="RNA polymerase Rpb1, domain 3"/>
    <property type="match status" value="1"/>
</dbReference>
<dbReference type="HAMAP" id="MF_01322">
    <property type="entry name" value="RNApol_bact_RpoC"/>
    <property type="match status" value="1"/>
</dbReference>
<dbReference type="InterPro" id="IPR045867">
    <property type="entry name" value="DNA-dir_RpoC_beta_prime"/>
</dbReference>
<dbReference type="InterPro" id="IPR012754">
    <property type="entry name" value="DNA-dir_RpoC_beta_prime_bact"/>
</dbReference>
<dbReference type="InterPro" id="IPR000722">
    <property type="entry name" value="RNA_pol_asu"/>
</dbReference>
<dbReference type="InterPro" id="IPR006592">
    <property type="entry name" value="RNA_pol_N"/>
</dbReference>
<dbReference type="InterPro" id="IPR007080">
    <property type="entry name" value="RNA_pol_Rpb1_1"/>
</dbReference>
<dbReference type="InterPro" id="IPR007066">
    <property type="entry name" value="RNA_pol_Rpb1_3"/>
</dbReference>
<dbReference type="InterPro" id="IPR042102">
    <property type="entry name" value="RNA_pol_Rpb1_3_sf"/>
</dbReference>
<dbReference type="InterPro" id="IPR007083">
    <property type="entry name" value="RNA_pol_Rpb1_4"/>
</dbReference>
<dbReference type="InterPro" id="IPR007081">
    <property type="entry name" value="RNA_pol_Rpb1_5"/>
</dbReference>
<dbReference type="InterPro" id="IPR044893">
    <property type="entry name" value="RNA_pol_Rpb1_clamp_domain"/>
</dbReference>
<dbReference type="InterPro" id="IPR038120">
    <property type="entry name" value="Rpb1_funnel_sf"/>
</dbReference>
<dbReference type="NCBIfam" id="TIGR02386">
    <property type="entry name" value="rpoC_TIGR"/>
    <property type="match status" value="1"/>
</dbReference>
<dbReference type="PANTHER" id="PTHR19376">
    <property type="entry name" value="DNA-DIRECTED RNA POLYMERASE"/>
    <property type="match status" value="1"/>
</dbReference>
<dbReference type="PANTHER" id="PTHR19376:SF54">
    <property type="entry name" value="DNA-DIRECTED RNA POLYMERASE SUBUNIT BETA"/>
    <property type="match status" value="1"/>
</dbReference>
<dbReference type="Pfam" id="PF04997">
    <property type="entry name" value="RNA_pol_Rpb1_1"/>
    <property type="match status" value="1"/>
</dbReference>
<dbReference type="Pfam" id="PF00623">
    <property type="entry name" value="RNA_pol_Rpb1_2"/>
    <property type="match status" value="2"/>
</dbReference>
<dbReference type="Pfam" id="PF04983">
    <property type="entry name" value="RNA_pol_Rpb1_3"/>
    <property type="match status" value="1"/>
</dbReference>
<dbReference type="Pfam" id="PF05000">
    <property type="entry name" value="RNA_pol_Rpb1_4"/>
    <property type="match status" value="1"/>
</dbReference>
<dbReference type="Pfam" id="PF04998">
    <property type="entry name" value="RNA_pol_Rpb1_5"/>
    <property type="match status" value="1"/>
</dbReference>
<dbReference type="SMART" id="SM00663">
    <property type="entry name" value="RPOLA_N"/>
    <property type="match status" value="1"/>
</dbReference>
<dbReference type="SUPFAM" id="SSF64484">
    <property type="entry name" value="beta and beta-prime subunits of DNA dependent RNA-polymerase"/>
    <property type="match status" value="1"/>
</dbReference>
<sequence length="1407" mass="155174">MKDLLKFLKAQTKTEEFDAIKIALASPDMIRSWSFGEVKKPETINYRTFKPERDGLFCARIFGPVKDYECLCGKYKRLKHRGVICEKCGVEVTQTKVRRERMGHIELASPTAHIWFLKSLPSRIGLLLDMPLRDIERVLYFESYVVIEGGMTNLERQQILTEEQYLDALEEFGDEFDAKMGAEAIQALLKSMDLEQECEQLREELNETNSETKRKKLTKRIKLLEAFVQSGNKPEWMILTVLPVLPPDLRPLVPLDGGRFATSDLNDLYRRVINRNNRLKRLLDLAAPDIIVRNEKRMLQEAVDALLDNGRRGRAITGSNKRPLKSLADMIKGKQGRFRQNLLGKRVDYSGRSVITVGPYLRLHQCGLPKKMALELFKPFIYGKLELRGLATTIKAAKKMVEREEAVVWDILDEVIREHPVLLNRAPTLHRLGIQAFEPVLIEGKAIQLHPLVCAAYNADFDGDQMAVHVPLTLEAQLEARALMMSTNNILSPANGEPIIVPSQDVVLGLYYMTRDCVNAKGEGMVLTGPKEAERLYRSGLASLHARVKVRITEYEKDANGELVAKTSLKDTTVGRAILWMIVPKGLPYTIVNQALGKKAISKMLNTCYRILGLKPTVIFADQIMYTGFAYAARSGASVGIDDMVIPEKKHEIISEAEAEVAEIQEQFQSGLVTAGERYNKVIDIWAAANDRVSKAMMDNLQTETVINRDGQEEKQVSFNSIYMMADSGARGSAAQIRQLAGMRGLMAKPDGSIIETPITANFREGLNVLQYFISTHGARKGLADTALKTANSGYLTRRLVDVAQDLVVTEDDCGTHEGIMMTPVIEGGDVKEPLRDRVLGRVTAEDVLKPGTADILVPRNTLLHEQWCDLLEENSVDAVKVRSVVSCDTDFGVCAHCYGRDLARGHIINKGEAIGVIAAQSIGEPGTQLTMRTFHIGGAASRAAAESSIQVKNKGSIKLSNVKSVVNSSGKLVITSRNTELKLIDEFGRTKESYKVPYGAVLAKGDGEQVAGGETVANWDPHTMPVITEVSGFVRFTDMIDGQTITRQTDELTGLSSLVVLDSAERTAGGKDLRPALKIVDAQGNDVLIPGTDMPAQYFLPGKAIVQLEDGVQISSGDTLARIPQESGGTKDITGGLPRVADLFEARRPKEPAILAEISGIVSFGKETKGKRRLVITPVDGSDPYEEMIPKWRQLNVFEGERVERGDVISDGPEAPHDILRLRGVHAVTRYIVNEVQDVYRLQGVKINDKHIEVIVRQMLRKATIVNAGSSDFLEGEQVEYSRVKIANRELEANGKVGATYSRDLLGITKASLATESFISAASFQETTRVLTEAAVAGKRDELRGLKENVIVGRLIPAGTGYAYHQDRMRRRAAGEAPAAPQVTAEDASASLAELLNAGLGGSDNE</sequence>
<protein>
    <recommendedName>
        <fullName evidence="1">DNA-directed RNA polymerase subunit beta'</fullName>
        <shortName evidence="1">RNAP subunit beta'</shortName>
        <ecNumber evidence="1">2.7.7.6</ecNumber>
    </recommendedName>
    <alternativeName>
        <fullName evidence="1">RNA polymerase subunit beta'</fullName>
    </alternativeName>
    <alternativeName>
        <fullName evidence="1">Transcriptase subunit beta'</fullName>
    </alternativeName>
</protein>
<organism>
    <name type="scientific">Escherichia coli O1:K1 / APEC</name>
    <dbReference type="NCBI Taxonomy" id="405955"/>
    <lineage>
        <taxon>Bacteria</taxon>
        <taxon>Pseudomonadati</taxon>
        <taxon>Pseudomonadota</taxon>
        <taxon>Gammaproteobacteria</taxon>
        <taxon>Enterobacterales</taxon>
        <taxon>Enterobacteriaceae</taxon>
        <taxon>Escherichia</taxon>
    </lineage>
</organism>
<feature type="chain" id="PRO_0000353360" description="DNA-directed RNA polymerase subunit beta'">
    <location>
        <begin position="1"/>
        <end position="1407"/>
    </location>
</feature>
<feature type="binding site" evidence="1">
    <location>
        <position position="70"/>
    </location>
    <ligand>
        <name>Zn(2+)</name>
        <dbReference type="ChEBI" id="CHEBI:29105"/>
        <label>1</label>
    </ligand>
</feature>
<feature type="binding site" evidence="1">
    <location>
        <position position="72"/>
    </location>
    <ligand>
        <name>Zn(2+)</name>
        <dbReference type="ChEBI" id="CHEBI:29105"/>
        <label>1</label>
    </ligand>
</feature>
<feature type="binding site" evidence="1">
    <location>
        <position position="85"/>
    </location>
    <ligand>
        <name>Zn(2+)</name>
        <dbReference type="ChEBI" id="CHEBI:29105"/>
        <label>1</label>
    </ligand>
</feature>
<feature type="binding site" evidence="1">
    <location>
        <position position="88"/>
    </location>
    <ligand>
        <name>Zn(2+)</name>
        <dbReference type="ChEBI" id="CHEBI:29105"/>
        <label>1</label>
    </ligand>
</feature>
<feature type="binding site" evidence="1">
    <location>
        <position position="460"/>
    </location>
    <ligand>
        <name>Mg(2+)</name>
        <dbReference type="ChEBI" id="CHEBI:18420"/>
    </ligand>
</feature>
<feature type="binding site" evidence="1">
    <location>
        <position position="462"/>
    </location>
    <ligand>
        <name>Mg(2+)</name>
        <dbReference type="ChEBI" id="CHEBI:18420"/>
    </ligand>
</feature>
<feature type="binding site" evidence="1">
    <location>
        <position position="464"/>
    </location>
    <ligand>
        <name>Mg(2+)</name>
        <dbReference type="ChEBI" id="CHEBI:18420"/>
    </ligand>
</feature>
<feature type="binding site" evidence="1">
    <location>
        <position position="814"/>
    </location>
    <ligand>
        <name>Zn(2+)</name>
        <dbReference type="ChEBI" id="CHEBI:29105"/>
        <label>2</label>
    </ligand>
</feature>
<feature type="binding site" evidence="1">
    <location>
        <position position="888"/>
    </location>
    <ligand>
        <name>Zn(2+)</name>
        <dbReference type="ChEBI" id="CHEBI:29105"/>
        <label>2</label>
    </ligand>
</feature>
<feature type="binding site" evidence="1">
    <location>
        <position position="895"/>
    </location>
    <ligand>
        <name>Zn(2+)</name>
        <dbReference type="ChEBI" id="CHEBI:29105"/>
        <label>2</label>
    </ligand>
</feature>
<feature type="binding site" evidence="1">
    <location>
        <position position="898"/>
    </location>
    <ligand>
        <name>Zn(2+)</name>
        <dbReference type="ChEBI" id="CHEBI:29105"/>
        <label>2</label>
    </ligand>
</feature>
<feature type="modified residue" description="N6-acetyllysine" evidence="1">
    <location>
        <position position="972"/>
    </location>
</feature>
<name>RPOC_ECOK1</name>